<feature type="chain" id="PRO_1000004928" description="Peptide chain release factor 1">
    <location>
        <begin position="1"/>
        <end position="354"/>
    </location>
</feature>
<feature type="modified residue" description="N5-methylglutamine" evidence="1">
    <location>
        <position position="230"/>
    </location>
</feature>
<dbReference type="EMBL" id="CP000482">
    <property type="protein sequence ID" value="ABL00252.1"/>
    <property type="molecule type" value="Genomic_DNA"/>
</dbReference>
<dbReference type="RefSeq" id="WP_011736504.1">
    <property type="nucleotide sequence ID" value="NC_008609.1"/>
</dbReference>
<dbReference type="SMR" id="A1ASD1"/>
<dbReference type="STRING" id="338966.Ppro_2647"/>
<dbReference type="KEGG" id="ppd:Ppro_2647"/>
<dbReference type="eggNOG" id="COG0216">
    <property type="taxonomic scope" value="Bacteria"/>
</dbReference>
<dbReference type="HOGENOM" id="CLU_036856_0_1_7"/>
<dbReference type="OrthoDB" id="9806673at2"/>
<dbReference type="Proteomes" id="UP000006732">
    <property type="component" value="Chromosome"/>
</dbReference>
<dbReference type="GO" id="GO:0005737">
    <property type="term" value="C:cytoplasm"/>
    <property type="evidence" value="ECO:0007669"/>
    <property type="project" value="UniProtKB-SubCell"/>
</dbReference>
<dbReference type="GO" id="GO:0016149">
    <property type="term" value="F:translation release factor activity, codon specific"/>
    <property type="evidence" value="ECO:0007669"/>
    <property type="project" value="UniProtKB-UniRule"/>
</dbReference>
<dbReference type="FunFam" id="3.30.160.20:FF:000004">
    <property type="entry name" value="Peptide chain release factor 1"/>
    <property type="match status" value="1"/>
</dbReference>
<dbReference type="FunFam" id="3.30.70.1660:FF:000002">
    <property type="entry name" value="Peptide chain release factor 1"/>
    <property type="match status" value="1"/>
</dbReference>
<dbReference type="FunFam" id="3.30.70.1660:FF:000004">
    <property type="entry name" value="Peptide chain release factor 1"/>
    <property type="match status" value="1"/>
</dbReference>
<dbReference type="Gene3D" id="3.30.160.20">
    <property type="match status" value="1"/>
</dbReference>
<dbReference type="Gene3D" id="3.30.70.1660">
    <property type="match status" value="2"/>
</dbReference>
<dbReference type="Gene3D" id="6.10.140.1950">
    <property type="match status" value="1"/>
</dbReference>
<dbReference type="HAMAP" id="MF_00093">
    <property type="entry name" value="Rel_fac_1"/>
    <property type="match status" value="1"/>
</dbReference>
<dbReference type="InterPro" id="IPR005139">
    <property type="entry name" value="PCRF"/>
</dbReference>
<dbReference type="InterPro" id="IPR000352">
    <property type="entry name" value="Pep_chain_release_fac_I"/>
</dbReference>
<dbReference type="InterPro" id="IPR045853">
    <property type="entry name" value="Pep_chain_release_fac_I_sf"/>
</dbReference>
<dbReference type="InterPro" id="IPR050057">
    <property type="entry name" value="Prokaryotic/Mito_RF"/>
</dbReference>
<dbReference type="InterPro" id="IPR004373">
    <property type="entry name" value="RF-1"/>
</dbReference>
<dbReference type="NCBIfam" id="TIGR00019">
    <property type="entry name" value="prfA"/>
    <property type="match status" value="1"/>
</dbReference>
<dbReference type="NCBIfam" id="NF001859">
    <property type="entry name" value="PRK00591.1"/>
    <property type="match status" value="1"/>
</dbReference>
<dbReference type="PANTHER" id="PTHR43804">
    <property type="entry name" value="LD18447P"/>
    <property type="match status" value="1"/>
</dbReference>
<dbReference type="PANTHER" id="PTHR43804:SF7">
    <property type="entry name" value="LD18447P"/>
    <property type="match status" value="1"/>
</dbReference>
<dbReference type="Pfam" id="PF03462">
    <property type="entry name" value="PCRF"/>
    <property type="match status" value="1"/>
</dbReference>
<dbReference type="Pfam" id="PF00472">
    <property type="entry name" value="RF-1"/>
    <property type="match status" value="1"/>
</dbReference>
<dbReference type="SMART" id="SM00937">
    <property type="entry name" value="PCRF"/>
    <property type="match status" value="1"/>
</dbReference>
<dbReference type="SUPFAM" id="SSF75620">
    <property type="entry name" value="Release factor"/>
    <property type="match status" value="1"/>
</dbReference>
<dbReference type="PROSITE" id="PS00745">
    <property type="entry name" value="RF_PROK_I"/>
    <property type="match status" value="1"/>
</dbReference>
<proteinExistence type="inferred from homology"/>
<gene>
    <name evidence="1" type="primary">prfA</name>
    <name type="ordered locus">Ppro_2647</name>
</gene>
<comment type="function">
    <text evidence="1">Peptide chain release factor 1 directs the termination of translation in response to the peptide chain termination codons UAG and UAA.</text>
</comment>
<comment type="subcellular location">
    <subcellularLocation>
        <location evidence="1">Cytoplasm</location>
    </subcellularLocation>
</comment>
<comment type="PTM">
    <text evidence="1">Methylated by PrmC. Methylation increases the termination efficiency of RF1.</text>
</comment>
<comment type="similarity">
    <text evidence="1">Belongs to the prokaryotic/mitochondrial release factor family.</text>
</comment>
<evidence type="ECO:0000255" key="1">
    <source>
        <dbReference type="HAMAP-Rule" id="MF_00093"/>
    </source>
</evidence>
<protein>
    <recommendedName>
        <fullName evidence="1">Peptide chain release factor 1</fullName>
        <shortName evidence="1">RF-1</shortName>
    </recommendedName>
</protein>
<name>RF1_PELPD</name>
<organism>
    <name type="scientific">Pelobacter propionicus (strain DSM 2379 / NBRC 103807 / OttBd1)</name>
    <dbReference type="NCBI Taxonomy" id="338966"/>
    <lineage>
        <taxon>Bacteria</taxon>
        <taxon>Pseudomonadati</taxon>
        <taxon>Thermodesulfobacteriota</taxon>
        <taxon>Desulfuromonadia</taxon>
        <taxon>Desulfuromonadales</taxon>
        <taxon>Desulfuromonadaceae</taxon>
        <taxon>Pelobacter</taxon>
    </lineage>
</organism>
<keyword id="KW-0963">Cytoplasm</keyword>
<keyword id="KW-0488">Methylation</keyword>
<keyword id="KW-0648">Protein biosynthesis</keyword>
<keyword id="KW-1185">Reference proteome</keyword>
<sequence>MFDKIEELERRYQELEALLSDPAVISNQPEFRKLSREHADLTGLVAAYRRYRRVLEEMEGNRELLADVDMKEMAEEELKVLEEEKERLEGEIQMLLLPRDPNDDKSVILEIRAGTGGDESALFAGDLFRMYSRFADVNRWKVETISASESERGGFKEIIASVEGEGVFAKLKYESGTHRVQRVPETEAQGRIHTSACTVAIMAEAEDVDIDINPTDLKIDVYRSSGAGGQHVNTTDSAVRITHLPTGTVVACQEERSQIKNRAKAMKVLKTRIMDSIQQEQNARMAADRKQQVGSGDRSERIRTYNFPQGRMTDHRIGLTLYRLDAIMAGDIAEIVDALRAHYQMEALKAQSEE</sequence>
<reference key="1">
    <citation type="submission" date="2006-10" db="EMBL/GenBank/DDBJ databases">
        <title>Complete sequence of chromosome of Pelobacter propionicus DSM 2379.</title>
        <authorList>
            <consortium name="US DOE Joint Genome Institute"/>
            <person name="Copeland A."/>
            <person name="Lucas S."/>
            <person name="Lapidus A."/>
            <person name="Barry K."/>
            <person name="Detter J.C."/>
            <person name="Glavina del Rio T."/>
            <person name="Hammon N."/>
            <person name="Israni S."/>
            <person name="Dalin E."/>
            <person name="Tice H."/>
            <person name="Pitluck S."/>
            <person name="Saunders E."/>
            <person name="Brettin T."/>
            <person name="Bruce D."/>
            <person name="Han C."/>
            <person name="Tapia R."/>
            <person name="Schmutz J."/>
            <person name="Larimer F."/>
            <person name="Land M."/>
            <person name="Hauser L."/>
            <person name="Kyrpides N."/>
            <person name="Kim E."/>
            <person name="Lovley D."/>
            <person name="Richardson P."/>
        </authorList>
    </citation>
    <scope>NUCLEOTIDE SEQUENCE [LARGE SCALE GENOMIC DNA]</scope>
    <source>
        <strain>DSM 2379 / NBRC 103807 / OttBd1</strain>
    </source>
</reference>
<accession>A1ASD1</accession>